<sequence>MRKIIHIDMDAFYASVEQRDNPELRGKPVAVGYPEARGVVAAASYEARKFGVHSAMPSVTAKRKCPELIFVPHRFDVYRAVSRQIQAIFAEYTPLVEPLSLDEAYLDVTENFRGLKLATEIAEEIRGRIRAETHLTASAGVSYNKFLAKMASDQRKPDGLFVITPKHGPDFVQALPVKKFHGVGPATAEKMKRLGIETGADLKSRDLAFLQQHFGKSGPYFYWIARGIDERKVKPDRIRKSIGAEDTFREDVHDLETARAGLKPLIDKVWHYCEASGIRGKTMTLKVKWADFTQITRSKTIVAPIASVAEMSEIAELLLSPIFPAPKGIRLLGVTLSSLDTVDDRSEPQLALAL</sequence>
<accession>Q92XH8</accession>
<keyword id="KW-0963">Cytoplasm</keyword>
<keyword id="KW-0227">DNA damage</keyword>
<keyword id="KW-0234">DNA repair</keyword>
<keyword id="KW-0235">DNA replication</keyword>
<keyword id="KW-0238">DNA-binding</keyword>
<keyword id="KW-0239">DNA-directed DNA polymerase</keyword>
<keyword id="KW-0460">Magnesium</keyword>
<keyword id="KW-0479">Metal-binding</keyword>
<keyword id="KW-0515">Mutator protein</keyword>
<keyword id="KW-0548">Nucleotidyltransferase</keyword>
<keyword id="KW-0614">Plasmid</keyword>
<keyword id="KW-1185">Reference proteome</keyword>
<keyword id="KW-0808">Transferase</keyword>
<comment type="function">
    <text evidence="1">Poorly processive, error-prone DNA polymerase involved in untargeted mutagenesis. Copies undamaged DNA at stalled replication forks, which arise in vivo from mismatched or misaligned primer ends. These misaligned primers can be extended by PolIV. Exhibits no 3'-5' exonuclease (proofreading) activity. May be involved in translesional synthesis, in conjunction with the beta clamp from PolIII (By similarity).</text>
</comment>
<comment type="catalytic activity">
    <reaction>
        <text>DNA(n) + a 2'-deoxyribonucleoside 5'-triphosphate = DNA(n+1) + diphosphate</text>
        <dbReference type="Rhea" id="RHEA:22508"/>
        <dbReference type="Rhea" id="RHEA-COMP:17339"/>
        <dbReference type="Rhea" id="RHEA-COMP:17340"/>
        <dbReference type="ChEBI" id="CHEBI:33019"/>
        <dbReference type="ChEBI" id="CHEBI:61560"/>
        <dbReference type="ChEBI" id="CHEBI:173112"/>
        <dbReference type="EC" id="2.7.7.7"/>
    </reaction>
</comment>
<comment type="cofactor">
    <cofactor evidence="1">
        <name>Mg(2+)</name>
        <dbReference type="ChEBI" id="CHEBI:18420"/>
    </cofactor>
    <text evidence="1">Binds 2 magnesium ions per subunit.</text>
</comment>
<comment type="subunit">
    <text evidence="1">Monomer.</text>
</comment>
<comment type="subcellular location">
    <subcellularLocation>
        <location evidence="1">Cytoplasm</location>
    </subcellularLocation>
</comment>
<comment type="similarity">
    <text evidence="2">Belongs to the DNA polymerase type-Y family.</text>
</comment>
<comment type="sequence caution" evidence="2">
    <conflict type="erroneous initiation">
        <sequence resource="EMBL-CDS" id="AAK65932"/>
    </conflict>
</comment>
<feature type="chain" id="PRO_0000173940" description="DNA polymerase IV 2">
    <location>
        <begin position="1"/>
        <end position="354"/>
    </location>
</feature>
<feature type="domain" description="UmuC">
    <location>
        <begin position="4"/>
        <end position="184"/>
    </location>
</feature>
<feature type="active site" evidence="1">
    <location>
        <position position="103"/>
    </location>
</feature>
<feature type="binding site" evidence="1">
    <location>
        <position position="8"/>
    </location>
    <ligand>
        <name>Mg(2+)</name>
        <dbReference type="ChEBI" id="CHEBI:18420"/>
    </ligand>
</feature>
<feature type="binding site" evidence="1">
    <location>
        <position position="102"/>
    </location>
    <ligand>
        <name>Mg(2+)</name>
        <dbReference type="ChEBI" id="CHEBI:18420"/>
    </ligand>
</feature>
<feature type="site" description="Substrate discrimination" evidence="1">
    <location>
        <position position="13"/>
    </location>
</feature>
<dbReference type="EC" id="2.7.7.7"/>
<dbReference type="EMBL" id="AE006469">
    <property type="protein sequence ID" value="AAK65932.2"/>
    <property type="status" value="ALT_INIT"/>
    <property type="molecule type" value="Genomic_DNA"/>
</dbReference>
<dbReference type="PIR" id="B95421">
    <property type="entry name" value="B95421"/>
</dbReference>
<dbReference type="RefSeq" id="NP_436520.4">
    <property type="nucleotide sequence ID" value="NC_003037.1"/>
</dbReference>
<dbReference type="SMR" id="Q92XH8"/>
<dbReference type="EnsemblBacteria" id="AAK65932">
    <property type="protein sequence ID" value="AAK65932"/>
    <property type="gene ID" value="SMa2355"/>
</dbReference>
<dbReference type="KEGG" id="sme:SMa2355"/>
<dbReference type="PATRIC" id="fig|266834.11.peg.1329"/>
<dbReference type="HOGENOM" id="CLU_012348_1_2_5"/>
<dbReference type="OrthoDB" id="9808813at2"/>
<dbReference type="Proteomes" id="UP000001976">
    <property type="component" value="Plasmid pSymA"/>
</dbReference>
<dbReference type="GO" id="GO:0005829">
    <property type="term" value="C:cytosol"/>
    <property type="evidence" value="ECO:0007669"/>
    <property type="project" value="TreeGrafter"/>
</dbReference>
<dbReference type="GO" id="GO:0003684">
    <property type="term" value="F:damaged DNA binding"/>
    <property type="evidence" value="ECO:0007669"/>
    <property type="project" value="InterPro"/>
</dbReference>
<dbReference type="GO" id="GO:0003887">
    <property type="term" value="F:DNA-directed DNA polymerase activity"/>
    <property type="evidence" value="ECO:0007669"/>
    <property type="project" value="UniProtKB-UniRule"/>
</dbReference>
<dbReference type="GO" id="GO:0000287">
    <property type="term" value="F:magnesium ion binding"/>
    <property type="evidence" value="ECO:0007669"/>
    <property type="project" value="UniProtKB-UniRule"/>
</dbReference>
<dbReference type="GO" id="GO:0006261">
    <property type="term" value="P:DNA-templated DNA replication"/>
    <property type="evidence" value="ECO:0007669"/>
    <property type="project" value="UniProtKB-UniRule"/>
</dbReference>
<dbReference type="GO" id="GO:0042276">
    <property type="term" value="P:error-prone translesion synthesis"/>
    <property type="evidence" value="ECO:0007669"/>
    <property type="project" value="TreeGrafter"/>
</dbReference>
<dbReference type="GO" id="GO:0009432">
    <property type="term" value="P:SOS response"/>
    <property type="evidence" value="ECO:0007669"/>
    <property type="project" value="TreeGrafter"/>
</dbReference>
<dbReference type="CDD" id="cd03586">
    <property type="entry name" value="PolY_Pol_IV_kappa"/>
    <property type="match status" value="1"/>
</dbReference>
<dbReference type="FunFam" id="1.10.150.20:FF:000019">
    <property type="entry name" value="DNA polymerase IV"/>
    <property type="match status" value="1"/>
</dbReference>
<dbReference type="FunFam" id="3.30.1490.100:FF:000004">
    <property type="entry name" value="DNA polymerase IV"/>
    <property type="match status" value="1"/>
</dbReference>
<dbReference type="FunFam" id="3.40.1170.60:FF:000001">
    <property type="entry name" value="DNA polymerase IV"/>
    <property type="match status" value="1"/>
</dbReference>
<dbReference type="Gene3D" id="3.30.70.270">
    <property type="match status" value="1"/>
</dbReference>
<dbReference type="Gene3D" id="3.40.1170.60">
    <property type="match status" value="1"/>
</dbReference>
<dbReference type="Gene3D" id="1.10.150.20">
    <property type="entry name" value="5' to 3' exonuclease, C-terminal subdomain"/>
    <property type="match status" value="1"/>
</dbReference>
<dbReference type="Gene3D" id="3.30.1490.100">
    <property type="entry name" value="DNA polymerase, Y-family, little finger domain"/>
    <property type="match status" value="1"/>
</dbReference>
<dbReference type="HAMAP" id="MF_01113">
    <property type="entry name" value="DNApol_IV"/>
    <property type="match status" value="1"/>
</dbReference>
<dbReference type="InterPro" id="IPR043502">
    <property type="entry name" value="DNA/RNA_pol_sf"/>
</dbReference>
<dbReference type="InterPro" id="IPR036775">
    <property type="entry name" value="DNA_pol_Y-fam_lit_finger_sf"/>
</dbReference>
<dbReference type="InterPro" id="IPR017961">
    <property type="entry name" value="DNA_pol_Y-fam_little_finger"/>
</dbReference>
<dbReference type="InterPro" id="IPR050116">
    <property type="entry name" value="DNA_polymerase-Y"/>
</dbReference>
<dbReference type="InterPro" id="IPR022880">
    <property type="entry name" value="DNApol_IV"/>
</dbReference>
<dbReference type="InterPro" id="IPR053848">
    <property type="entry name" value="IMS_HHH_1"/>
</dbReference>
<dbReference type="InterPro" id="IPR043128">
    <property type="entry name" value="Rev_trsase/Diguanyl_cyclase"/>
</dbReference>
<dbReference type="InterPro" id="IPR001126">
    <property type="entry name" value="UmuC"/>
</dbReference>
<dbReference type="NCBIfam" id="NF002677">
    <property type="entry name" value="PRK02406.1"/>
    <property type="match status" value="1"/>
</dbReference>
<dbReference type="PANTHER" id="PTHR11076:SF33">
    <property type="entry name" value="DNA POLYMERASE KAPPA"/>
    <property type="match status" value="1"/>
</dbReference>
<dbReference type="PANTHER" id="PTHR11076">
    <property type="entry name" value="DNA REPAIR POLYMERASE UMUC / TRANSFERASE FAMILY MEMBER"/>
    <property type="match status" value="1"/>
</dbReference>
<dbReference type="Pfam" id="PF00817">
    <property type="entry name" value="IMS"/>
    <property type="match status" value="1"/>
</dbReference>
<dbReference type="Pfam" id="PF11799">
    <property type="entry name" value="IMS_C"/>
    <property type="match status" value="1"/>
</dbReference>
<dbReference type="Pfam" id="PF21999">
    <property type="entry name" value="IMS_HHH_1"/>
    <property type="match status" value="1"/>
</dbReference>
<dbReference type="SUPFAM" id="SSF56672">
    <property type="entry name" value="DNA/RNA polymerases"/>
    <property type="match status" value="1"/>
</dbReference>
<dbReference type="SUPFAM" id="SSF100879">
    <property type="entry name" value="Lesion bypass DNA polymerase (Y-family), little finger domain"/>
    <property type="match status" value="1"/>
</dbReference>
<dbReference type="PROSITE" id="PS50173">
    <property type="entry name" value="UMUC"/>
    <property type="match status" value="1"/>
</dbReference>
<geneLocation type="plasmid">
    <name>pSymA</name>
    <name>megaplasmid 1</name>
</geneLocation>
<reference key="1">
    <citation type="journal article" date="2001" name="Proc. Natl. Acad. Sci. U.S.A.">
        <title>Nucleotide sequence and predicted functions of the entire Sinorhizobium meliloti pSymA megaplasmid.</title>
        <authorList>
            <person name="Barnett M.J."/>
            <person name="Fisher R.F."/>
            <person name="Jones T."/>
            <person name="Komp C."/>
            <person name="Abola A.P."/>
            <person name="Barloy-Hubler F."/>
            <person name="Bowser L."/>
            <person name="Capela D."/>
            <person name="Galibert F."/>
            <person name="Gouzy J."/>
            <person name="Gurjal M."/>
            <person name="Hong A."/>
            <person name="Huizar L."/>
            <person name="Hyman R.W."/>
            <person name="Kahn D."/>
            <person name="Kahn M.L."/>
            <person name="Kalman S."/>
            <person name="Keating D.H."/>
            <person name="Palm C."/>
            <person name="Peck M.C."/>
            <person name="Surzycki R."/>
            <person name="Wells D.H."/>
            <person name="Yeh K.-C."/>
            <person name="Davis R.W."/>
            <person name="Federspiel N.A."/>
            <person name="Long S.R."/>
        </authorList>
    </citation>
    <scope>NUCLEOTIDE SEQUENCE [LARGE SCALE GENOMIC DNA]</scope>
    <source>
        <strain>1021</strain>
    </source>
</reference>
<reference key="2">
    <citation type="journal article" date="2001" name="Science">
        <title>The composite genome of the legume symbiont Sinorhizobium meliloti.</title>
        <authorList>
            <person name="Galibert F."/>
            <person name="Finan T.M."/>
            <person name="Long S.R."/>
            <person name="Puehler A."/>
            <person name="Abola P."/>
            <person name="Ampe F."/>
            <person name="Barloy-Hubler F."/>
            <person name="Barnett M.J."/>
            <person name="Becker A."/>
            <person name="Boistard P."/>
            <person name="Bothe G."/>
            <person name="Boutry M."/>
            <person name="Bowser L."/>
            <person name="Buhrmester J."/>
            <person name="Cadieu E."/>
            <person name="Capela D."/>
            <person name="Chain P."/>
            <person name="Cowie A."/>
            <person name="Davis R.W."/>
            <person name="Dreano S."/>
            <person name="Federspiel N.A."/>
            <person name="Fisher R.F."/>
            <person name="Gloux S."/>
            <person name="Godrie T."/>
            <person name="Goffeau A."/>
            <person name="Golding B."/>
            <person name="Gouzy J."/>
            <person name="Gurjal M."/>
            <person name="Hernandez-Lucas I."/>
            <person name="Hong A."/>
            <person name="Huizar L."/>
            <person name="Hyman R.W."/>
            <person name="Jones T."/>
            <person name="Kahn D."/>
            <person name="Kahn M.L."/>
            <person name="Kalman S."/>
            <person name="Keating D.H."/>
            <person name="Kiss E."/>
            <person name="Komp C."/>
            <person name="Lelaure V."/>
            <person name="Masuy D."/>
            <person name="Palm C."/>
            <person name="Peck M.C."/>
            <person name="Pohl T.M."/>
            <person name="Portetelle D."/>
            <person name="Purnelle B."/>
            <person name="Ramsperger U."/>
            <person name="Surzycki R."/>
            <person name="Thebault P."/>
            <person name="Vandenbol M."/>
            <person name="Vorhoelter F.J."/>
            <person name="Weidner S."/>
            <person name="Wells D.H."/>
            <person name="Wong K."/>
            <person name="Yeh K.-C."/>
            <person name="Batut J."/>
        </authorList>
    </citation>
    <scope>NUCLEOTIDE SEQUENCE [LARGE SCALE GENOMIC DNA]</scope>
    <source>
        <strain>1021</strain>
    </source>
</reference>
<protein>
    <recommendedName>
        <fullName>DNA polymerase IV 2</fullName>
        <shortName>Pol IV 2</shortName>
        <ecNumber>2.7.7.7</ecNumber>
    </recommendedName>
</protein>
<evidence type="ECO:0000250" key="1"/>
<evidence type="ECO:0000305" key="2"/>
<proteinExistence type="inferred from homology"/>
<gene>
    <name type="primary">dinB2</name>
    <name type="ordered locus">RA1274</name>
    <name type="ORF">SMa2355</name>
</gene>
<organism>
    <name type="scientific">Rhizobium meliloti (strain 1021)</name>
    <name type="common">Ensifer meliloti</name>
    <name type="synonym">Sinorhizobium meliloti</name>
    <dbReference type="NCBI Taxonomy" id="266834"/>
    <lineage>
        <taxon>Bacteria</taxon>
        <taxon>Pseudomonadati</taxon>
        <taxon>Pseudomonadota</taxon>
        <taxon>Alphaproteobacteria</taxon>
        <taxon>Hyphomicrobiales</taxon>
        <taxon>Rhizobiaceae</taxon>
        <taxon>Sinorhizobium/Ensifer group</taxon>
        <taxon>Sinorhizobium</taxon>
    </lineage>
</organism>
<name>DPO42_RHIME</name>